<dbReference type="EMBL" id="AAFI02000100">
    <property type="protein sequence ID" value="EAL63730.1"/>
    <property type="molecule type" value="Genomic_DNA"/>
</dbReference>
<dbReference type="RefSeq" id="XP_637239.1">
    <property type="nucleotide sequence ID" value="XM_632147.1"/>
</dbReference>
<dbReference type="SMR" id="Q54KI4"/>
<dbReference type="FunCoup" id="Q54KI4">
    <property type="interactions" value="381"/>
</dbReference>
<dbReference type="STRING" id="44689.Q54KI4"/>
<dbReference type="GlyGen" id="Q54KI4">
    <property type="glycosylation" value="1 site"/>
</dbReference>
<dbReference type="PaxDb" id="44689-DDB0238505"/>
<dbReference type="EnsemblProtists" id="EAL63730">
    <property type="protein sequence ID" value="EAL63730"/>
    <property type="gene ID" value="DDB_G0287325"/>
</dbReference>
<dbReference type="GeneID" id="8626070"/>
<dbReference type="KEGG" id="ddi:DDB_G0287325"/>
<dbReference type="dictyBase" id="DDB_G0287325"/>
<dbReference type="VEuPathDB" id="AmoebaDB:DDB_G0287325"/>
<dbReference type="eggNOG" id="KOG0998">
    <property type="taxonomic scope" value="Eukaryota"/>
</dbReference>
<dbReference type="HOGENOM" id="CLU_271317_0_0_1"/>
<dbReference type="InParanoid" id="Q54KI4"/>
<dbReference type="OMA" id="MSKFTPT"/>
<dbReference type="Reactome" id="R-DDI-193648">
    <property type="pathway name" value="NRAGE signals death through JNK"/>
</dbReference>
<dbReference type="Reactome" id="R-DDI-8856825">
    <property type="pathway name" value="Cargo recognition for clathrin-mediated endocytosis"/>
</dbReference>
<dbReference type="Reactome" id="R-DDI-8856828">
    <property type="pathway name" value="Clathrin-mediated endocytosis"/>
</dbReference>
<dbReference type="Reactome" id="R-DDI-9013148">
    <property type="pathway name" value="CDC42 GTPase cycle"/>
</dbReference>
<dbReference type="Reactome" id="R-DDI-9013406">
    <property type="pathway name" value="RHOQ GTPase cycle"/>
</dbReference>
<dbReference type="Reactome" id="R-DDI-9013408">
    <property type="pathway name" value="RHOG GTPase cycle"/>
</dbReference>
<dbReference type="Reactome" id="R-DDI-9013420">
    <property type="pathway name" value="RHOU GTPase cycle"/>
</dbReference>
<dbReference type="PRO" id="PR:Q54KI4"/>
<dbReference type="Proteomes" id="UP000002195">
    <property type="component" value="Chromosome 5"/>
</dbReference>
<dbReference type="GO" id="GO:0030122">
    <property type="term" value="C:AP-2 adaptor complex"/>
    <property type="evidence" value="ECO:0000314"/>
    <property type="project" value="dictyBase"/>
</dbReference>
<dbReference type="GO" id="GO:0030132">
    <property type="term" value="C:clathrin coat of coated pit"/>
    <property type="evidence" value="ECO:0000305"/>
    <property type="project" value="dictyBase"/>
</dbReference>
<dbReference type="GO" id="GO:0005737">
    <property type="term" value="C:cytoplasm"/>
    <property type="evidence" value="ECO:0000318"/>
    <property type="project" value="GO_Central"/>
</dbReference>
<dbReference type="GO" id="GO:0005886">
    <property type="term" value="C:plasma membrane"/>
    <property type="evidence" value="ECO:0000318"/>
    <property type="project" value="GO_Central"/>
</dbReference>
<dbReference type="GO" id="GO:0005509">
    <property type="term" value="F:calcium ion binding"/>
    <property type="evidence" value="ECO:0007669"/>
    <property type="project" value="InterPro"/>
</dbReference>
<dbReference type="GO" id="GO:0006897">
    <property type="term" value="P:endocytosis"/>
    <property type="evidence" value="ECO:0000318"/>
    <property type="project" value="GO_Central"/>
</dbReference>
<dbReference type="GO" id="GO:0016197">
    <property type="term" value="P:endosomal transport"/>
    <property type="evidence" value="ECO:0000318"/>
    <property type="project" value="GO_Central"/>
</dbReference>
<dbReference type="GO" id="GO:0015031">
    <property type="term" value="P:protein transport"/>
    <property type="evidence" value="ECO:0007669"/>
    <property type="project" value="UniProtKB-KW"/>
</dbReference>
<dbReference type="CDD" id="cd00052">
    <property type="entry name" value="EH"/>
    <property type="match status" value="3"/>
</dbReference>
<dbReference type="Gene3D" id="1.10.238.10">
    <property type="entry name" value="EF-hand"/>
    <property type="match status" value="3"/>
</dbReference>
<dbReference type="InterPro" id="IPR011992">
    <property type="entry name" value="EF-hand-dom_pair"/>
</dbReference>
<dbReference type="InterPro" id="IPR018247">
    <property type="entry name" value="EF_Hand_1_Ca_BS"/>
</dbReference>
<dbReference type="InterPro" id="IPR002048">
    <property type="entry name" value="EF_hand_dom"/>
</dbReference>
<dbReference type="InterPro" id="IPR000261">
    <property type="entry name" value="EH_dom"/>
</dbReference>
<dbReference type="PANTHER" id="PTHR11216">
    <property type="entry name" value="EH DOMAIN"/>
    <property type="match status" value="1"/>
</dbReference>
<dbReference type="PANTHER" id="PTHR11216:SF174">
    <property type="entry name" value="GH06923P"/>
    <property type="match status" value="1"/>
</dbReference>
<dbReference type="Pfam" id="PF12763">
    <property type="entry name" value="EH"/>
    <property type="match status" value="3"/>
</dbReference>
<dbReference type="SMART" id="SM00054">
    <property type="entry name" value="EFh"/>
    <property type="match status" value="5"/>
</dbReference>
<dbReference type="SMART" id="SM00027">
    <property type="entry name" value="EH"/>
    <property type="match status" value="3"/>
</dbReference>
<dbReference type="SUPFAM" id="SSF47473">
    <property type="entry name" value="EF-hand"/>
    <property type="match status" value="3"/>
</dbReference>
<dbReference type="PROSITE" id="PS00018">
    <property type="entry name" value="EF_HAND_1"/>
    <property type="match status" value="1"/>
</dbReference>
<dbReference type="PROSITE" id="PS50222">
    <property type="entry name" value="EF_HAND_2"/>
    <property type="match status" value="4"/>
</dbReference>
<dbReference type="PROSITE" id="PS50031">
    <property type="entry name" value="EH"/>
    <property type="match status" value="3"/>
</dbReference>
<gene>
    <name type="primary">eps15</name>
    <name type="ORF">DDB_G0287325</name>
</gene>
<comment type="function">
    <text>May be involved in clathrin-mediated endocytosis.</text>
</comment>
<comment type="subunit">
    <text evidence="6">Interacts with tom1.</text>
</comment>
<comment type="subcellular location">
    <subcellularLocation>
        <location evidence="1">Cell membrane</location>
        <topology evidence="1">Peripheral membrane protein</topology>
        <orientation evidence="1">Cytoplasmic side</orientation>
    </subcellularLocation>
</comment>
<feature type="chain" id="PRO_0000375888" description="Epidermal growth factor receptor substrate 15 homolog">
    <location>
        <begin position="1"/>
        <end position="1196"/>
    </location>
</feature>
<feature type="domain" description="EF-hand 1" evidence="4">
    <location>
        <begin position="10"/>
        <end position="45"/>
    </location>
</feature>
<feature type="domain" description="EH 1" evidence="3">
    <location>
        <begin position="11"/>
        <end position="100"/>
    </location>
</feature>
<feature type="domain" description="EF-hand 2" evidence="4">
    <location>
        <begin position="46"/>
        <end position="77"/>
    </location>
</feature>
<feature type="domain" description="EF-hand 3" evidence="4">
    <location>
        <begin position="114"/>
        <end position="149"/>
    </location>
</feature>
<feature type="domain" description="EH 2" evidence="3">
    <location>
        <begin position="115"/>
        <end position="204"/>
    </location>
</feature>
<feature type="domain" description="EH 3" evidence="3">
    <location>
        <begin position="223"/>
        <end position="310"/>
    </location>
</feature>
<feature type="domain" description="EF-hand 4" evidence="4">
    <location>
        <begin position="254"/>
        <end position="289"/>
    </location>
</feature>
<feature type="region of interest" description="Disordered" evidence="5">
    <location>
        <begin position="309"/>
        <end position="511"/>
    </location>
</feature>
<feature type="region of interest" description="Disordered" evidence="5">
    <location>
        <begin position="733"/>
        <end position="755"/>
    </location>
</feature>
<feature type="region of interest" description="Disordered" evidence="5">
    <location>
        <begin position="790"/>
        <end position="810"/>
    </location>
</feature>
<feature type="region of interest" description="Disordered" evidence="5">
    <location>
        <begin position="822"/>
        <end position="852"/>
    </location>
</feature>
<feature type="region of interest" description="Disordered" evidence="5">
    <location>
        <begin position="905"/>
        <end position="932"/>
    </location>
</feature>
<feature type="region of interest" description="Disordered" evidence="5">
    <location>
        <begin position="976"/>
        <end position="1082"/>
    </location>
</feature>
<feature type="region of interest" description="Disordered" evidence="5">
    <location>
        <begin position="1101"/>
        <end position="1133"/>
    </location>
</feature>
<feature type="region of interest" description="Disordered" evidence="5">
    <location>
        <begin position="1157"/>
        <end position="1196"/>
    </location>
</feature>
<feature type="coiled-coil region" evidence="2">
    <location>
        <begin position="512"/>
        <end position="718"/>
    </location>
</feature>
<feature type="compositionally biased region" description="Low complexity" evidence="5">
    <location>
        <begin position="324"/>
        <end position="340"/>
    </location>
</feature>
<feature type="compositionally biased region" description="Polar residues" evidence="5">
    <location>
        <begin position="341"/>
        <end position="356"/>
    </location>
</feature>
<feature type="compositionally biased region" description="Low complexity" evidence="5">
    <location>
        <begin position="357"/>
        <end position="378"/>
    </location>
</feature>
<feature type="compositionally biased region" description="Polar residues" evidence="5">
    <location>
        <begin position="403"/>
        <end position="417"/>
    </location>
</feature>
<feature type="compositionally biased region" description="Polar residues" evidence="5">
    <location>
        <begin position="430"/>
        <end position="440"/>
    </location>
</feature>
<feature type="compositionally biased region" description="Low complexity" evidence="5">
    <location>
        <begin position="441"/>
        <end position="478"/>
    </location>
</feature>
<feature type="compositionally biased region" description="Low complexity" evidence="5">
    <location>
        <begin position="485"/>
        <end position="511"/>
    </location>
</feature>
<feature type="compositionally biased region" description="Low complexity" evidence="5">
    <location>
        <begin position="734"/>
        <end position="751"/>
    </location>
</feature>
<feature type="compositionally biased region" description="Polar residues" evidence="5">
    <location>
        <begin position="912"/>
        <end position="932"/>
    </location>
</feature>
<feature type="compositionally biased region" description="Low complexity" evidence="5">
    <location>
        <begin position="977"/>
        <end position="1009"/>
    </location>
</feature>
<feature type="compositionally biased region" description="Low complexity" evidence="5">
    <location>
        <begin position="1019"/>
        <end position="1081"/>
    </location>
</feature>
<feature type="compositionally biased region" description="Polar residues" evidence="5">
    <location>
        <begin position="1106"/>
        <end position="1133"/>
    </location>
</feature>
<feature type="compositionally biased region" description="Low complexity" evidence="5">
    <location>
        <begin position="1160"/>
        <end position="1196"/>
    </location>
</feature>
<reference key="1">
    <citation type="journal article" date="2005" name="Nature">
        <title>The genome of the social amoeba Dictyostelium discoideum.</title>
        <authorList>
            <person name="Eichinger L."/>
            <person name="Pachebat J.A."/>
            <person name="Gloeckner G."/>
            <person name="Rajandream M.A."/>
            <person name="Sucgang R."/>
            <person name="Berriman M."/>
            <person name="Song J."/>
            <person name="Olsen R."/>
            <person name="Szafranski K."/>
            <person name="Xu Q."/>
            <person name="Tunggal B."/>
            <person name="Kummerfeld S."/>
            <person name="Madera M."/>
            <person name="Konfortov B.A."/>
            <person name="Rivero F."/>
            <person name="Bankier A.T."/>
            <person name="Lehmann R."/>
            <person name="Hamlin N."/>
            <person name="Davies R."/>
            <person name="Gaudet P."/>
            <person name="Fey P."/>
            <person name="Pilcher K."/>
            <person name="Chen G."/>
            <person name="Saunders D."/>
            <person name="Sodergren E.J."/>
            <person name="Davis P."/>
            <person name="Kerhornou A."/>
            <person name="Nie X."/>
            <person name="Hall N."/>
            <person name="Anjard C."/>
            <person name="Hemphill L."/>
            <person name="Bason N."/>
            <person name="Farbrother P."/>
            <person name="Desany B."/>
            <person name="Just E."/>
            <person name="Morio T."/>
            <person name="Rost R."/>
            <person name="Churcher C.M."/>
            <person name="Cooper J."/>
            <person name="Haydock S."/>
            <person name="van Driessche N."/>
            <person name="Cronin A."/>
            <person name="Goodhead I."/>
            <person name="Muzny D.M."/>
            <person name="Mourier T."/>
            <person name="Pain A."/>
            <person name="Lu M."/>
            <person name="Harper D."/>
            <person name="Lindsay R."/>
            <person name="Hauser H."/>
            <person name="James K.D."/>
            <person name="Quiles M."/>
            <person name="Madan Babu M."/>
            <person name="Saito T."/>
            <person name="Buchrieser C."/>
            <person name="Wardroper A."/>
            <person name="Felder M."/>
            <person name="Thangavelu M."/>
            <person name="Johnson D."/>
            <person name="Knights A."/>
            <person name="Loulseged H."/>
            <person name="Mungall K.L."/>
            <person name="Oliver K."/>
            <person name="Price C."/>
            <person name="Quail M.A."/>
            <person name="Urushihara H."/>
            <person name="Hernandez J."/>
            <person name="Rabbinowitsch E."/>
            <person name="Steffen D."/>
            <person name="Sanders M."/>
            <person name="Ma J."/>
            <person name="Kohara Y."/>
            <person name="Sharp S."/>
            <person name="Simmonds M.N."/>
            <person name="Spiegler S."/>
            <person name="Tivey A."/>
            <person name="Sugano S."/>
            <person name="White B."/>
            <person name="Walker D."/>
            <person name="Woodward J.R."/>
            <person name="Winckler T."/>
            <person name="Tanaka Y."/>
            <person name="Shaulsky G."/>
            <person name="Schleicher M."/>
            <person name="Weinstock G.M."/>
            <person name="Rosenthal A."/>
            <person name="Cox E.C."/>
            <person name="Chisholm R.L."/>
            <person name="Gibbs R.A."/>
            <person name="Loomis W.F."/>
            <person name="Platzer M."/>
            <person name="Kay R.R."/>
            <person name="Williams J.G."/>
            <person name="Dear P.H."/>
            <person name="Noegel A.A."/>
            <person name="Barrell B.G."/>
            <person name="Kuspa A."/>
        </authorList>
    </citation>
    <scope>NUCLEOTIDE SEQUENCE [LARGE SCALE GENOMIC DNA]</scope>
    <source>
        <strain>AX4</strain>
    </source>
</reference>
<reference key="2">
    <citation type="journal article" date="2009" name="Traffic">
        <title>Dictyostelium Tom1 participates in an ancestral ESCRT-0 complex.</title>
        <authorList>
            <person name="Blanc C."/>
            <person name="Charette S.J."/>
            <person name="Mattei S."/>
            <person name="Aubry L."/>
            <person name="Smith E.W."/>
            <person name="Cosson P."/>
            <person name="Letourneur F."/>
        </authorList>
    </citation>
    <scope>INTERACTION WITH TOM1</scope>
</reference>
<protein>
    <recommendedName>
        <fullName>Epidermal growth factor receptor substrate 15 homolog</fullName>
    </recommendedName>
</protein>
<organism>
    <name type="scientific">Dictyostelium discoideum</name>
    <name type="common">Social amoeba</name>
    <dbReference type="NCBI Taxonomy" id="44689"/>
    <lineage>
        <taxon>Eukaryota</taxon>
        <taxon>Amoebozoa</taxon>
        <taxon>Evosea</taxon>
        <taxon>Eumycetozoa</taxon>
        <taxon>Dictyostelia</taxon>
        <taxon>Dictyosteliales</taxon>
        <taxon>Dictyosteliaceae</taxon>
        <taxon>Dictyostelium</taxon>
    </lineage>
</organism>
<evidence type="ECO:0000250" key="1"/>
<evidence type="ECO:0000255" key="2"/>
<evidence type="ECO:0000255" key="3">
    <source>
        <dbReference type="PROSITE-ProRule" id="PRU00077"/>
    </source>
</evidence>
<evidence type="ECO:0000255" key="4">
    <source>
        <dbReference type="PROSITE-ProRule" id="PRU00448"/>
    </source>
</evidence>
<evidence type="ECO:0000256" key="5">
    <source>
        <dbReference type="SAM" id="MobiDB-lite"/>
    </source>
</evidence>
<evidence type="ECO:0000269" key="6">
    <source>
    </source>
</evidence>
<sequence>MRSEAQVPPAQKVYYEELFQIADVDKDGVIGLNDASFFRNSMLSNDILRDIWQLSDVNNGYLNIDDFFVALKLVSLAQMGAPVTLDSIKLIPVIPPPKLNDIPPLKNDWIISNGEKQNYIDLFNKYDEDGDGFILGSQAKTIFGTSGLPTKMLSHIWNLSDVSKDQKLDCQEFIMATFLIRSVLKGYELPNKLPESLITSSHYISSAGVPSPKIPEWLIPPPERIIYEDLFNKNQQGGIFTGSQAKVLFEKSGLSNQDLKLIWDLADHNQEQVLDKHKFVIAMFLISQRKKGKELPQSLPQLLLESSKSTFNPSSITSPPPQSSPQSSQLQQQPPQQQQQTGDSKYNINLNDLVSNTTPIGQPNIQPTTTTTTTPATASGGLNVSGLLSPPPQQQSPSIVGTPPSTITREGSFTFDNSGGGNNLLAKPPRSNSITRMNSFQHQLPQQQQQQVSPQSTISNTSIGSGSSSFLSTNATTSSPPPIPSTSSQPTSSNNSSITSNNNNPISPTSTNITQLFENIEKVKQQVFEQERIRQEEIQVKLNQELQLEAELKQQLAQEQQQLDEVRENVKEEEIKLSSIKADNQSLKEQISTARVDIKSLKSQLEQQSSLLREKSELFDEQNEALSHLNDDLKEKQQELQKNKQQIEQLLSSIESIKQNRTDVKNQISTVTKQLNDSKLELKQLAEEQKQQKQKLAEEQKQLQQLQQQQQQQATSKSLTSVKSDDNITFLSGINTNTTSTNTATSIPTASVSGNDNWDFFNSPPVKSSSSLPTSPFDDDKTFVPTFTTTTTTTNNNNNNNTINTSNGNLTFTSPVKSTVNQLKSSNSSVGGTGGSVSTRKLSGASVSSNNSFNDNTSIDTLNNHFGSDQFSFNSFGSNNLTAPPTTSSSTNKVQSDFFGVGGGNKDPFGGDSNNNPFGEESTSSIRDGGSETLSEAHTLFDKDPLFETNDAFQSSKDPFGQILFSNFTKDSFGGESVSNNSNNSSIISSNTIPSSNFTFNTNSTTTNNRQSPIDSDLFSDNQQQQQQQQQQQQQQQQQQQQQQQPTQSNQNNQSFTSNDSFDDFQTTPTPTNNNNNTTTTEFGVKFSDTTFGDSSNGDFDFGSNVFGQPSANDPFSSSIEPQHQPDTNNVSSDPFKGGFDDFGSAPFSFDNKFNEVVGDDSPSLTTATTTTTNDNDNGTFVFNDNNNNTPSPFDS</sequence>
<name>EPS15_DICDI</name>
<proteinExistence type="evidence at protein level"/>
<keyword id="KW-0106">Calcium</keyword>
<keyword id="KW-1003">Cell membrane</keyword>
<keyword id="KW-0175">Coiled coil</keyword>
<keyword id="KW-0472">Membrane</keyword>
<keyword id="KW-0653">Protein transport</keyword>
<keyword id="KW-1185">Reference proteome</keyword>
<keyword id="KW-0677">Repeat</keyword>
<keyword id="KW-0813">Transport</keyword>
<accession>Q54KI4</accession>